<protein>
    <recommendedName>
        <fullName evidence="1">Coproheme decarboxylase</fullName>
        <ecNumber evidence="1">1.3.98.5</ecNumber>
    </recommendedName>
    <alternativeName>
        <fullName evidence="1">Coproheme III oxidative decarboxylase</fullName>
    </alternativeName>
    <alternativeName>
        <fullName evidence="1">Hydrogen peroxide-dependent heme synthase</fullName>
    </alternativeName>
</protein>
<evidence type="ECO:0000255" key="1">
    <source>
        <dbReference type="HAMAP-Rule" id="MF_01442"/>
    </source>
</evidence>
<sequence length="247" mass="28696">MSEATTTLDGWYCLHDLRSIDWAAWKTLSSDERGQAVSEFLNVVEKWNEVATAKKGSHAMYTVVGQKADIMLMILRPTMEELNEIETELNKTTLAEYMVPAYSYVSVVELSNYLPADEDPYQNPQILARLYPELPKANHICFYPMDKRRQGDDNWYMLPMEERKKMMYSHSKIGRQYAGKVRQVISGSVGFDDFEWGVTLFADDVLQFKKLIYEMRFDEVSARYGEFGTFFVGNILPDEKVEKFLHI</sequence>
<gene>
    <name evidence="1" type="primary">chdC</name>
    <name type="ordered locus">BCB4264_A5511</name>
</gene>
<dbReference type="EC" id="1.3.98.5" evidence="1"/>
<dbReference type="EMBL" id="CP001176">
    <property type="protein sequence ID" value="ACK64009.1"/>
    <property type="molecule type" value="Genomic_DNA"/>
</dbReference>
<dbReference type="SMR" id="B7HG50"/>
<dbReference type="KEGG" id="bcb:BCB4264_A5511"/>
<dbReference type="HOGENOM" id="CLU_063226_1_0_9"/>
<dbReference type="UniPathway" id="UPA00252"/>
<dbReference type="Proteomes" id="UP000007096">
    <property type="component" value="Chromosome"/>
</dbReference>
<dbReference type="GO" id="GO:0020037">
    <property type="term" value="F:heme binding"/>
    <property type="evidence" value="ECO:0007669"/>
    <property type="project" value="InterPro"/>
</dbReference>
<dbReference type="GO" id="GO:0046872">
    <property type="term" value="F:metal ion binding"/>
    <property type="evidence" value="ECO:0007669"/>
    <property type="project" value="UniProtKB-KW"/>
</dbReference>
<dbReference type="GO" id="GO:0016634">
    <property type="term" value="F:oxidoreductase activity, acting on the CH-CH group of donors, oxygen as acceptor"/>
    <property type="evidence" value="ECO:0007669"/>
    <property type="project" value="UniProtKB-UniRule"/>
</dbReference>
<dbReference type="GO" id="GO:0004601">
    <property type="term" value="F:peroxidase activity"/>
    <property type="evidence" value="ECO:0007669"/>
    <property type="project" value="InterPro"/>
</dbReference>
<dbReference type="GO" id="GO:0006785">
    <property type="term" value="P:heme B biosynthetic process"/>
    <property type="evidence" value="ECO:0007669"/>
    <property type="project" value="UniProtKB-UniRule"/>
</dbReference>
<dbReference type="Gene3D" id="3.30.70.1030">
    <property type="entry name" value="Apc35880, domain 1"/>
    <property type="match status" value="2"/>
</dbReference>
<dbReference type="HAMAP" id="MF_01442">
    <property type="entry name" value="Coproheme_decarbox_1"/>
    <property type="match status" value="1"/>
</dbReference>
<dbReference type="InterPro" id="IPR031332">
    <property type="entry name" value="CHDC"/>
</dbReference>
<dbReference type="InterPro" id="IPR010644">
    <property type="entry name" value="ChdC/CLD"/>
</dbReference>
<dbReference type="InterPro" id="IPR011008">
    <property type="entry name" value="Dimeric_a/b-barrel"/>
</dbReference>
<dbReference type="NCBIfam" id="NF008913">
    <property type="entry name" value="PRK12276.1"/>
    <property type="match status" value="1"/>
</dbReference>
<dbReference type="PANTHER" id="PTHR36843:SF1">
    <property type="entry name" value="COPROHEME DECARBOXYLASE"/>
    <property type="match status" value="1"/>
</dbReference>
<dbReference type="PANTHER" id="PTHR36843">
    <property type="entry name" value="HEME-DEPENDENT PEROXIDASE YWFI-RELATED"/>
    <property type="match status" value="1"/>
</dbReference>
<dbReference type="Pfam" id="PF06778">
    <property type="entry name" value="Chlor_dismutase"/>
    <property type="match status" value="1"/>
</dbReference>
<dbReference type="SUPFAM" id="SSF54909">
    <property type="entry name" value="Dimeric alpha+beta barrel"/>
    <property type="match status" value="1"/>
</dbReference>
<name>CHDC_BACC4</name>
<organism>
    <name type="scientific">Bacillus cereus (strain B4264)</name>
    <dbReference type="NCBI Taxonomy" id="405532"/>
    <lineage>
        <taxon>Bacteria</taxon>
        <taxon>Bacillati</taxon>
        <taxon>Bacillota</taxon>
        <taxon>Bacilli</taxon>
        <taxon>Bacillales</taxon>
        <taxon>Bacillaceae</taxon>
        <taxon>Bacillus</taxon>
        <taxon>Bacillus cereus group</taxon>
    </lineage>
</organism>
<keyword id="KW-0349">Heme</keyword>
<keyword id="KW-0350">Heme biosynthesis</keyword>
<keyword id="KW-0408">Iron</keyword>
<keyword id="KW-0479">Metal-binding</keyword>
<keyword id="KW-0560">Oxidoreductase</keyword>
<accession>B7HG50</accession>
<proteinExistence type="inferred from homology"/>
<feature type="chain" id="PRO_1000145923" description="Coproheme decarboxylase">
    <location>
        <begin position="1"/>
        <end position="247"/>
    </location>
</feature>
<feature type="active site" evidence="1">
    <location>
        <position position="143"/>
    </location>
</feature>
<feature type="binding site" evidence="1">
    <location>
        <position position="129"/>
    </location>
    <ligand>
        <name>Fe-coproporphyrin III</name>
        <dbReference type="ChEBI" id="CHEBI:68438"/>
    </ligand>
</feature>
<feature type="binding site" evidence="1">
    <location>
        <begin position="143"/>
        <end position="147"/>
    </location>
    <ligand>
        <name>Fe-coproporphyrin III</name>
        <dbReference type="ChEBI" id="CHEBI:68438"/>
    </ligand>
</feature>
<feature type="binding site" description="axial binding residue" evidence="1">
    <location>
        <position position="170"/>
    </location>
    <ligand>
        <name>Fe-coproporphyrin III</name>
        <dbReference type="ChEBI" id="CHEBI:68438"/>
    </ligand>
    <ligandPart>
        <name>Fe</name>
        <dbReference type="ChEBI" id="CHEBI:18248"/>
    </ligandPart>
</feature>
<feature type="binding site" evidence="1">
    <location>
        <position position="183"/>
    </location>
    <ligand>
        <name>Fe-coproporphyrin III</name>
        <dbReference type="ChEBI" id="CHEBI:68438"/>
    </ligand>
</feature>
<feature type="binding site" evidence="1">
    <location>
        <position position="221"/>
    </location>
    <ligand>
        <name>Fe-coproporphyrin III</name>
        <dbReference type="ChEBI" id="CHEBI:68438"/>
    </ligand>
</feature>
<reference key="1">
    <citation type="submission" date="2008-10" db="EMBL/GenBank/DDBJ databases">
        <title>Genome sequence of Bacillus cereus B4264.</title>
        <authorList>
            <person name="Dodson R.J."/>
            <person name="Durkin A.S."/>
            <person name="Rosovitz M.J."/>
            <person name="Rasko D.A."/>
            <person name="Hoffmaster A."/>
            <person name="Ravel J."/>
            <person name="Sutton G."/>
        </authorList>
    </citation>
    <scope>NUCLEOTIDE SEQUENCE [LARGE SCALE GENOMIC DNA]</scope>
    <source>
        <strain>B4264</strain>
    </source>
</reference>
<comment type="function">
    <text evidence="1">Involved in coproporphyrin-dependent heme b biosynthesis. Catalyzes the decarboxylation of Fe-coproporphyrin III (coproheme) to heme b (protoheme IX), the last step of the pathway. The reaction occurs in a stepwise manner with a three-propionate intermediate.</text>
</comment>
<comment type="catalytic activity">
    <reaction evidence="1">
        <text>Fe-coproporphyrin III + 2 H2O2 + 2 H(+) = heme b + 2 CO2 + 4 H2O</text>
        <dbReference type="Rhea" id="RHEA:56516"/>
        <dbReference type="ChEBI" id="CHEBI:15377"/>
        <dbReference type="ChEBI" id="CHEBI:15378"/>
        <dbReference type="ChEBI" id="CHEBI:16240"/>
        <dbReference type="ChEBI" id="CHEBI:16526"/>
        <dbReference type="ChEBI" id="CHEBI:60344"/>
        <dbReference type="ChEBI" id="CHEBI:68438"/>
        <dbReference type="EC" id="1.3.98.5"/>
    </reaction>
    <physiologicalReaction direction="left-to-right" evidence="1">
        <dbReference type="Rhea" id="RHEA:56517"/>
    </physiologicalReaction>
</comment>
<comment type="catalytic activity">
    <reaction evidence="1">
        <text>Fe-coproporphyrin III + H2O2 + H(+) = harderoheme III + CO2 + 2 H2O</text>
        <dbReference type="Rhea" id="RHEA:57940"/>
        <dbReference type="ChEBI" id="CHEBI:15377"/>
        <dbReference type="ChEBI" id="CHEBI:15378"/>
        <dbReference type="ChEBI" id="CHEBI:16240"/>
        <dbReference type="ChEBI" id="CHEBI:16526"/>
        <dbReference type="ChEBI" id="CHEBI:68438"/>
        <dbReference type="ChEBI" id="CHEBI:142463"/>
    </reaction>
    <physiologicalReaction direction="left-to-right" evidence="1">
        <dbReference type="Rhea" id="RHEA:57941"/>
    </physiologicalReaction>
</comment>
<comment type="catalytic activity">
    <reaction evidence="1">
        <text>harderoheme III + H2O2 + H(+) = heme b + CO2 + 2 H2O</text>
        <dbReference type="Rhea" id="RHEA:57944"/>
        <dbReference type="ChEBI" id="CHEBI:15377"/>
        <dbReference type="ChEBI" id="CHEBI:15378"/>
        <dbReference type="ChEBI" id="CHEBI:16240"/>
        <dbReference type="ChEBI" id="CHEBI:16526"/>
        <dbReference type="ChEBI" id="CHEBI:60344"/>
        <dbReference type="ChEBI" id="CHEBI:142463"/>
    </reaction>
    <physiologicalReaction direction="left-to-right" evidence="1">
        <dbReference type="Rhea" id="RHEA:57945"/>
    </physiologicalReaction>
</comment>
<comment type="cofactor">
    <cofactor evidence="1">
        <name>Fe-coproporphyrin III</name>
        <dbReference type="ChEBI" id="CHEBI:68438"/>
    </cofactor>
    <text evidence="1">Fe-coproporphyrin III acts both as a substrate and a redox cofactor.</text>
</comment>
<comment type="pathway">
    <text evidence="1">Porphyrin-containing compound metabolism; protoheme biosynthesis.</text>
</comment>
<comment type="similarity">
    <text evidence="1">Belongs to the ChdC family. Type 1 subfamily.</text>
</comment>